<gene>
    <name evidence="1" type="primary">purA</name>
    <name type="ordered locus">Ppha_0322</name>
</gene>
<proteinExistence type="inferred from homology"/>
<feature type="chain" id="PRO_1000089321" description="Adenylosuccinate synthetase">
    <location>
        <begin position="1"/>
        <end position="434"/>
    </location>
</feature>
<feature type="active site" description="Proton acceptor" evidence="1">
    <location>
        <position position="23"/>
    </location>
</feature>
<feature type="active site" description="Proton donor" evidence="1">
    <location>
        <position position="51"/>
    </location>
</feature>
<feature type="binding site" evidence="1">
    <location>
        <begin position="22"/>
        <end position="28"/>
    </location>
    <ligand>
        <name>GTP</name>
        <dbReference type="ChEBI" id="CHEBI:37565"/>
    </ligand>
</feature>
<feature type="binding site" description="in other chain" evidence="1">
    <location>
        <begin position="23"/>
        <end position="26"/>
    </location>
    <ligand>
        <name>IMP</name>
        <dbReference type="ChEBI" id="CHEBI:58053"/>
        <note>ligand shared between dimeric partners</note>
    </ligand>
</feature>
<feature type="binding site" evidence="1">
    <location>
        <position position="23"/>
    </location>
    <ligand>
        <name>Mg(2+)</name>
        <dbReference type="ChEBI" id="CHEBI:18420"/>
    </ligand>
</feature>
<feature type="binding site" description="in other chain" evidence="1">
    <location>
        <begin position="48"/>
        <end position="51"/>
    </location>
    <ligand>
        <name>IMP</name>
        <dbReference type="ChEBI" id="CHEBI:58053"/>
        <note>ligand shared between dimeric partners</note>
    </ligand>
</feature>
<feature type="binding site" evidence="1">
    <location>
        <begin position="50"/>
        <end position="52"/>
    </location>
    <ligand>
        <name>GTP</name>
        <dbReference type="ChEBI" id="CHEBI:37565"/>
    </ligand>
</feature>
<feature type="binding site" evidence="1">
    <location>
        <position position="50"/>
    </location>
    <ligand>
        <name>Mg(2+)</name>
        <dbReference type="ChEBI" id="CHEBI:18420"/>
    </ligand>
</feature>
<feature type="binding site" description="in other chain" evidence="1">
    <location>
        <position position="139"/>
    </location>
    <ligand>
        <name>IMP</name>
        <dbReference type="ChEBI" id="CHEBI:58053"/>
        <note>ligand shared between dimeric partners</note>
    </ligand>
</feature>
<feature type="binding site" evidence="1">
    <location>
        <position position="153"/>
    </location>
    <ligand>
        <name>IMP</name>
        <dbReference type="ChEBI" id="CHEBI:58053"/>
        <note>ligand shared between dimeric partners</note>
    </ligand>
</feature>
<feature type="binding site" description="in other chain" evidence="1">
    <location>
        <position position="234"/>
    </location>
    <ligand>
        <name>IMP</name>
        <dbReference type="ChEBI" id="CHEBI:58053"/>
        <note>ligand shared between dimeric partners</note>
    </ligand>
</feature>
<feature type="binding site" description="in other chain" evidence="1">
    <location>
        <position position="249"/>
    </location>
    <ligand>
        <name>IMP</name>
        <dbReference type="ChEBI" id="CHEBI:58053"/>
        <note>ligand shared between dimeric partners</note>
    </ligand>
</feature>
<feature type="binding site" evidence="1">
    <location>
        <begin position="309"/>
        <end position="315"/>
    </location>
    <ligand>
        <name>substrate</name>
    </ligand>
</feature>
<feature type="binding site" description="in other chain" evidence="1">
    <location>
        <position position="313"/>
    </location>
    <ligand>
        <name>IMP</name>
        <dbReference type="ChEBI" id="CHEBI:58053"/>
        <note>ligand shared between dimeric partners</note>
    </ligand>
</feature>
<feature type="binding site" evidence="1">
    <location>
        <position position="315"/>
    </location>
    <ligand>
        <name>GTP</name>
        <dbReference type="ChEBI" id="CHEBI:37565"/>
    </ligand>
</feature>
<feature type="binding site" evidence="1">
    <location>
        <begin position="341"/>
        <end position="343"/>
    </location>
    <ligand>
        <name>GTP</name>
        <dbReference type="ChEBI" id="CHEBI:37565"/>
    </ligand>
</feature>
<feature type="binding site" evidence="1">
    <location>
        <begin position="423"/>
        <end position="425"/>
    </location>
    <ligand>
        <name>GTP</name>
        <dbReference type="ChEBI" id="CHEBI:37565"/>
    </ligand>
</feature>
<comment type="function">
    <text evidence="1">Plays an important role in the de novo pathway of purine nucleotide biosynthesis. Catalyzes the first committed step in the biosynthesis of AMP from IMP.</text>
</comment>
<comment type="catalytic activity">
    <reaction evidence="1">
        <text>IMP + L-aspartate + GTP = N(6)-(1,2-dicarboxyethyl)-AMP + GDP + phosphate + 2 H(+)</text>
        <dbReference type="Rhea" id="RHEA:15753"/>
        <dbReference type="ChEBI" id="CHEBI:15378"/>
        <dbReference type="ChEBI" id="CHEBI:29991"/>
        <dbReference type="ChEBI" id="CHEBI:37565"/>
        <dbReference type="ChEBI" id="CHEBI:43474"/>
        <dbReference type="ChEBI" id="CHEBI:57567"/>
        <dbReference type="ChEBI" id="CHEBI:58053"/>
        <dbReference type="ChEBI" id="CHEBI:58189"/>
        <dbReference type="EC" id="6.3.4.4"/>
    </reaction>
</comment>
<comment type="cofactor">
    <cofactor evidence="1">
        <name>Mg(2+)</name>
        <dbReference type="ChEBI" id="CHEBI:18420"/>
    </cofactor>
    <text evidence="1">Binds 1 Mg(2+) ion per subunit.</text>
</comment>
<comment type="pathway">
    <text evidence="1">Purine metabolism; AMP biosynthesis via de novo pathway; AMP from IMP: step 1/2.</text>
</comment>
<comment type="subunit">
    <text evidence="1">Homodimer.</text>
</comment>
<comment type="subcellular location">
    <subcellularLocation>
        <location evidence="1">Cytoplasm</location>
    </subcellularLocation>
</comment>
<comment type="similarity">
    <text evidence="1">Belongs to the adenylosuccinate synthetase family.</text>
</comment>
<protein>
    <recommendedName>
        <fullName evidence="1">Adenylosuccinate synthetase</fullName>
        <shortName evidence="1">AMPSase</shortName>
        <shortName evidence="1">AdSS</shortName>
        <ecNumber evidence="1">6.3.4.4</ecNumber>
    </recommendedName>
    <alternativeName>
        <fullName evidence="1">IMP--aspartate ligase</fullName>
    </alternativeName>
</protein>
<accession>B4SC75</accession>
<keyword id="KW-0963">Cytoplasm</keyword>
<keyword id="KW-0342">GTP-binding</keyword>
<keyword id="KW-0436">Ligase</keyword>
<keyword id="KW-0460">Magnesium</keyword>
<keyword id="KW-0479">Metal-binding</keyword>
<keyword id="KW-0547">Nucleotide-binding</keyword>
<keyword id="KW-0658">Purine biosynthesis</keyword>
<keyword id="KW-1185">Reference proteome</keyword>
<name>PURA_PELPB</name>
<organism>
    <name type="scientific">Pelodictyon phaeoclathratiforme (strain DSM 5477 / BU-1)</name>
    <dbReference type="NCBI Taxonomy" id="324925"/>
    <lineage>
        <taxon>Bacteria</taxon>
        <taxon>Pseudomonadati</taxon>
        <taxon>Chlorobiota</taxon>
        <taxon>Chlorobiia</taxon>
        <taxon>Chlorobiales</taxon>
        <taxon>Chlorobiaceae</taxon>
        <taxon>Chlorobium/Pelodictyon group</taxon>
        <taxon>Pelodictyon</taxon>
    </lineage>
</organism>
<evidence type="ECO:0000255" key="1">
    <source>
        <dbReference type="HAMAP-Rule" id="MF_00011"/>
    </source>
</evidence>
<reference key="1">
    <citation type="submission" date="2008-06" db="EMBL/GenBank/DDBJ databases">
        <title>Complete sequence of Pelodictyon phaeoclathratiforme BU-1.</title>
        <authorList>
            <consortium name="US DOE Joint Genome Institute"/>
            <person name="Lucas S."/>
            <person name="Copeland A."/>
            <person name="Lapidus A."/>
            <person name="Glavina del Rio T."/>
            <person name="Dalin E."/>
            <person name="Tice H."/>
            <person name="Bruce D."/>
            <person name="Goodwin L."/>
            <person name="Pitluck S."/>
            <person name="Schmutz J."/>
            <person name="Larimer F."/>
            <person name="Land M."/>
            <person name="Hauser L."/>
            <person name="Kyrpides N."/>
            <person name="Mikhailova N."/>
            <person name="Liu Z."/>
            <person name="Li T."/>
            <person name="Zhao F."/>
            <person name="Overmann J."/>
            <person name="Bryant D.A."/>
            <person name="Richardson P."/>
        </authorList>
    </citation>
    <scope>NUCLEOTIDE SEQUENCE [LARGE SCALE GENOMIC DNA]</scope>
    <source>
        <strain>DSM 5477 / BU-1</strain>
    </source>
</reference>
<dbReference type="EC" id="6.3.4.4" evidence="1"/>
<dbReference type="EMBL" id="CP001110">
    <property type="protein sequence ID" value="ACF42655.1"/>
    <property type="molecule type" value="Genomic_DNA"/>
</dbReference>
<dbReference type="RefSeq" id="WP_012507150.1">
    <property type="nucleotide sequence ID" value="NC_011060.1"/>
</dbReference>
<dbReference type="SMR" id="B4SC75"/>
<dbReference type="STRING" id="324925.Ppha_0322"/>
<dbReference type="KEGG" id="pph:Ppha_0322"/>
<dbReference type="eggNOG" id="COG0104">
    <property type="taxonomic scope" value="Bacteria"/>
</dbReference>
<dbReference type="HOGENOM" id="CLU_029848_0_0_10"/>
<dbReference type="OrthoDB" id="9807553at2"/>
<dbReference type="UniPathway" id="UPA00075">
    <property type="reaction ID" value="UER00335"/>
</dbReference>
<dbReference type="Proteomes" id="UP000002724">
    <property type="component" value="Chromosome"/>
</dbReference>
<dbReference type="GO" id="GO:0005737">
    <property type="term" value="C:cytoplasm"/>
    <property type="evidence" value="ECO:0007669"/>
    <property type="project" value="UniProtKB-SubCell"/>
</dbReference>
<dbReference type="GO" id="GO:0004019">
    <property type="term" value="F:adenylosuccinate synthase activity"/>
    <property type="evidence" value="ECO:0007669"/>
    <property type="project" value="UniProtKB-UniRule"/>
</dbReference>
<dbReference type="GO" id="GO:0005525">
    <property type="term" value="F:GTP binding"/>
    <property type="evidence" value="ECO:0007669"/>
    <property type="project" value="UniProtKB-UniRule"/>
</dbReference>
<dbReference type="GO" id="GO:0000287">
    <property type="term" value="F:magnesium ion binding"/>
    <property type="evidence" value="ECO:0007669"/>
    <property type="project" value="UniProtKB-UniRule"/>
</dbReference>
<dbReference type="GO" id="GO:0044208">
    <property type="term" value="P:'de novo' AMP biosynthetic process"/>
    <property type="evidence" value="ECO:0007669"/>
    <property type="project" value="UniProtKB-UniRule"/>
</dbReference>
<dbReference type="GO" id="GO:0046040">
    <property type="term" value="P:IMP metabolic process"/>
    <property type="evidence" value="ECO:0007669"/>
    <property type="project" value="TreeGrafter"/>
</dbReference>
<dbReference type="CDD" id="cd03108">
    <property type="entry name" value="AdSS"/>
    <property type="match status" value="1"/>
</dbReference>
<dbReference type="FunFam" id="1.10.300.10:FF:000001">
    <property type="entry name" value="Adenylosuccinate synthetase"/>
    <property type="match status" value="1"/>
</dbReference>
<dbReference type="FunFam" id="3.90.170.10:FF:000001">
    <property type="entry name" value="Adenylosuccinate synthetase"/>
    <property type="match status" value="1"/>
</dbReference>
<dbReference type="Gene3D" id="3.40.440.10">
    <property type="entry name" value="Adenylosuccinate Synthetase, subunit A, domain 1"/>
    <property type="match status" value="1"/>
</dbReference>
<dbReference type="Gene3D" id="1.10.300.10">
    <property type="entry name" value="Adenylosuccinate Synthetase, subunit A, domain 2"/>
    <property type="match status" value="1"/>
</dbReference>
<dbReference type="Gene3D" id="3.90.170.10">
    <property type="entry name" value="Adenylosuccinate Synthetase, subunit A, domain 3"/>
    <property type="match status" value="1"/>
</dbReference>
<dbReference type="HAMAP" id="MF_00011">
    <property type="entry name" value="Adenylosucc_synth"/>
    <property type="match status" value="1"/>
</dbReference>
<dbReference type="InterPro" id="IPR018220">
    <property type="entry name" value="Adenylosuccin_syn_GTP-bd"/>
</dbReference>
<dbReference type="InterPro" id="IPR033128">
    <property type="entry name" value="Adenylosuccin_syn_Lys_AS"/>
</dbReference>
<dbReference type="InterPro" id="IPR042109">
    <property type="entry name" value="Adenylosuccinate_synth_dom1"/>
</dbReference>
<dbReference type="InterPro" id="IPR042110">
    <property type="entry name" value="Adenylosuccinate_synth_dom2"/>
</dbReference>
<dbReference type="InterPro" id="IPR042111">
    <property type="entry name" value="Adenylosuccinate_synth_dom3"/>
</dbReference>
<dbReference type="InterPro" id="IPR001114">
    <property type="entry name" value="Adenylosuccinate_synthetase"/>
</dbReference>
<dbReference type="InterPro" id="IPR027417">
    <property type="entry name" value="P-loop_NTPase"/>
</dbReference>
<dbReference type="NCBIfam" id="NF002223">
    <property type="entry name" value="PRK01117.1"/>
    <property type="match status" value="1"/>
</dbReference>
<dbReference type="NCBIfam" id="TIGR00184">
    <property type="entry name" value="purA"/>
    <property type="match status" value="1"/>
</dbReference>
<dbReference type="PANTHER" id="PTHR11846">
    <property type="entry name" value="ADENYLOSUCCINATE SYNTHETASE"/>
    <property type="match status" value="1"/>
</dbReference>
<dbReference type="PANTHER" id="PTHR11846:SF0">
    <property type="entry name" value="ADENYLOSUCCINATE SYNTHETASE"/>
    <property type="match status" value="1"/>
</dbReference>
<dbReference type="Pfam" id="PF00709">
    <property type="entry name" value="Adenylsucc_synt"/>
    <property type="match status" value="1"/>
</dbReference>
<dbReference type="SMART" id="SM00788">
    <property type="entry name" value="Adenylsucc_synt"/>
    <property type="match status" value="1"/>
</dbReference>
<dbReference type="SUPFAM" id="SSF52540">
    <property type="entry name" value="P-loop containing nucleoside triphosphate hydrolases"/>
    <property type="match status" value="1"/>
</dbReference>
<dbReference type="PROSITE" id="PS01266">
    <property type="entry name" value="ADENYLOSUCCIN_SYN_1"/>
    <property type="match status" value="1"/>
</dbReference>
<dbReference type="PROSITE" id="PS00513">
    <property type="entry name" value="ADENYLOSUCCIN_SYN_2"/>
    <property type="match status" value="1"/>
</dbReference>
<sequence>MESKKFRTPSQSATVIVGTQFGDEGKGKLVDYLSDKYDIVVRYQGGANAGHTICFDNKTVVLHLIPSGIFHKGCVCVIGNGVVIDPAALLDEIRKVEELGYEVTGRLFISHNAHLIMPYHKLLDSLHESAQGDQKIGTTGRGIGPSYEDKFARKGIRVVDLLNPEVLKEKLRENLAAKNKLFKNIYEKEEIDVETMVREYEDFDKIIDPYVTNTQLYLNRQLQEGKTVLLEGAQGCLLDVDHGTYPYVTSSNPTSGGASTGSGIAPNYIGKVIGVCKAYMTRVGNGAFPTELLDETGERLGKIGHEFGATTGRKRRCGWIDLVALRYSLTINGVTEIALTKLDVLDTFEEIRICTSYMLDGKEIHDFPTDHQTLSRVTPLYTTLKGWMASNAHARSFSEMQPEAQNYVTFLEDELQVQVTFISVGPGREETVFR</sequence>